<proteinExistence type="evidence at protein level"/>
<dbReference type="SMR" id="C0HLF6"/>
<dbReference type="GO" id="GO:0005576">
    <property type="term" value="C:extracellular region"/>
    <property type="evidence" value="ECO:0007669"/>
    <property type="project" value="UniProtKB-SubCell"/>
</dbReference>
<dbReference type="GO" id="GO:0016020">
    <property type="term" value="C:membrane"/>
    <property type="evidence" value="ECO:0007669"/>
    <property type="project" value="UniProtKB-KW"/>
</dbReference>
<dbReference type="GO" id="GO:0044218">
    <property type="term" value="C:other organism cell membrane"/>
    <property type="evidence" value="ECO:0007669"/>
    <property type="project" value="UniProtKB-KW"/>
</dbReference>
<dbReference type="GO" id="GO:0090729">
    <property type="term" value="F:toxin activity"/>
    <property type="evidence" value="ECO:0007669"/>
    <property type="project" value="UniProtKB-KW"/>
</dbReference>
<dbReference type="GO" id="GO:0042742">
    <property type="term" value="P:defense response to bacterium"/>
    <property type="evidence" value="ECO:0007669"/>
    <property type="project" value="UniProtKB-KW"/>
</dbReference>
<dbReference type="GO" id="GO:0031640">
    <property type="term" value="P:killing of cells of another organism"/>
    <property type="evidence" value="ECO:0007669"/>
    <property type="project" value="UniProtKB-KW"/>
</dbReference>
<protein>
    <recommendedName>
        <fullName evidence="4">M-oxotoxin-Ot1c</fullName>
        <shortName evidence="4">M-OXTX-Ot1c</shortName>
    </recommendedName>
    <alternativeName>
        <fullName evidence="3">Oxyopinin-1c</fullName>
    </alternativeName>
</protein>
<feature type="chain" id="PRO_0000446062" description="M-oxotoxin-Ot1c" evidence="2">
    <location>
        <begin position="1"/>
        <end position="48"/>
    </location>
</feature>
<organism>
    <name type="scientific">Oxyopes takobius</name>
    <name type="common">Lynx spider</name>
    <name type="synonym">Oxyopes foliiformis</name>
    <dbReference type="NCBI Taxonomy" id="666126"/>
    <lineage>
        <taxon>Eukaryota</taxon>
        <taxon>Metazoa</taxon>
        <taxon>Ecdysozoa</taxon>
        <taxon>Arthropoda</taxon>
        <taxon>Chelicerata</taxon>
        <taxon>Arachnida</taxon>
        <taxon>Araneae</taxon>
        <taxon>Araneomorphae</taxon>
        <taxon>Entelegynae</taxon>
        <taxon>Lycosoidea</taxon>
        <taxon>Oxyopidae</taxon>
        <taxon>Oxyopes</taxon>
    </lineage>
</organism>
<accession>C0HLF6</accession>
<reference evidence="4" key="1">
    <citation type="submission" date="2018-09" db="UniProtKB">
        <authorList>
            <person name="Vassilevski A."/>
            <person name="Grishin E."/>
        </authorList>
    </citation>
    <scope>PROTEIN SEQUENCE</scope>
    <scope>SUBCELLULAR LOCATION</scope>
    <scope>MASS SPECTROMETRY</scope>
    <source>
        <tissue evidence="2">Venom</tissue>
    </source>
</reference>
<comment type="function">
    <text evidence="1">Disrupts cell membranes, particularly those rich in phosphocholine, through formation of pores. Has antimicrobial activity, hemolytic activity and insecticidal activity.</text>
</comment>
<comment type="subcellular location">
    <subcellularLocation>
        <location evidence="2">Secreted</location>
    </subcellularLocation>
    <subcellularLocation>
        <location evidence="1">Target cell membrane</location>
    </subcellularLocation>
    <text evidence="1">Forms a transmembrane alpha-helix in the target cell membrane. Forms a membrane channel in the prey.</text>
</comment>
<comment type="mass spectrometry" mass="5233.1" error="0.5" method="MALDI" evidence="2"/>
<comment type="similarity">
    <text evidence="4">Belongs to the cationic peptide 02 (oxyopinin-2) family.</text>
</comment>
<evidence type="ECO:0000250" key="1">
    <source>
        <dbReference type="UniProtKB" id="P83247"/>
    </source>
</evidence>
<evidence type="ECO:0000269" key="2">
    <source ref="1"/>
</evidence>
<evidence type="ECO:0000303" key="3">
    <source ref="1"/>
</evidence>
<evidence type="ECO:0000305" key="4"/>
<sequence length="48" mass="5233">FRGLAKLLKIGLKSFARVLKKILPKAAKAGKSLAKSLADENAIRQQNQ</sequence>
<name>TOP1C_OXYTA</name>
<keyword id="KW-0044">Antibiotic</keyword>
<keyword id="KW-0929">Antimicrobial</keyword>
<keyword id="KW-0204">Cytolysis</keyword>
<keyword id="KW-0903">Direct protein sequencing</keyword>
<keyword id="KW-0354">Hemolysis</keyword>
<keyword id="KW-0472">Membrane</keyword>
<keyword id="KW-0964">Secreted</keyword>
<keyword id="KW-1052">Target cell membrane</keyword>
<keyword id="KW-1053">Target membrane</keyword>
<keyword id="KW-0800">Toxin</keyword>